<reference evidence="6 7" key="1">
    <citation type="journal article" date="1996" name="Neurosci. Lett.">
        <title>Molecular cloning of a cDNA encoding the precursor of APGWamide related neuropeptides from the bivalve mollusc Mytilus edulis.</title>
        <authorList>
            <person name="Favrel P."/>
            <person name="Mathieu M."/>
        </authorList>
    </citation>
    <scope>NUCLEOTIDE SEQUENCE [MRNA]</scope>
    <scope>TISSUE SPECIFICITY</scope>
    <source>
        <tissue evidence="3">Cerebral ganglion</tissue>
    </source>
</reference>
<reference evidence="6" key="2">
    <citation type="journal article" date="2000" name="Brain Res.">
        <title>HPLC and electrospray ionization mass spectrometry as tools for the identification of APGWamide-related peptides in gastropod and bivalve mollusks: comparative activities on Mytilus muscles.</title>
        <authorList>
            <person name="Henry J."/>
            <person name="Zatylny C."/>
            <person name="Favrel P."/>
        </authorList>
    </citation>
    <scope>FUNCTION</scope>
    <scope>TISSUE SPECIFICITY</scope>
    <scope>AMIDATION AT TRP-54; TRP-74; TRP-94; TRP-111; TRP-135; TRP-151 AND TRP-158</scope>
    <scope>MASS SPECTROMETRY</scope>
</reference>
<organism>
    <name type="scientific">Mytilus edulis</name>
    <name type="common">Blue mussel</name>
    <dbReference type="NCBI Taxonomy" id="6550"/>
    <lineage>
        <taxon>Eukaryota</taxon>
        <taxon>Metazoa</taxon>
        <taxon>Spiralia</taxon>
        <taxon>Lophotrochozoa</taxon>
        <taxon>Mollusca</taxon>
        <taxon>Bivalvia</taxon>
        <taxon>Autobranchia</taxon>
        <taxon>Pteriomorphia</taxon>
        <taxon>Mytilida</taxon>
        <taxon>Mytiloidea</taxon>
        <taxon>Mytilidae</taxon>
        <taxon>Mytilinae</taxon>
        <taxon>Mytilus</taxon>
    </lineage>
</organism>
<feature type="signal peptide" evidence="1 6">
    <location>
        <begin position="1"/>
        <end position="22"/>
    </location>
</feature>
<feature type="propeptide" id="PRO_0000391442" evidence="3">
    <location>
        <begin position="23"/>
        <end position="48"/>
    </location>
</feature>
<feature type="peptide" id="PRO_0000391443" description="RPGW-amide" evidence="2 3">
    <location>
        <begin position="51"/>
        <end position="54"/>
    </location>
</feature>
<feature type="propeptide" id="PRO_0000391444" evidence="3">
    <location>
        <begin position="58"/>
        <end position="68"/>
    </location>
</feature>
<feature type="peptide" id="PRO_0000391445" description="RPGW-amide" evidence="2 3">
    <location>
        <begin position="71"/>
        <end position="74"/>
    </location>
</feature>
<feature type="propeptide" id="PRO_0000391446" evidence="3">
    <location>
        <begin position="78"/>
        <end position="88"/>
    </location>
</feature>
<feature type="peptide" id="PRO_0000391447" description="RPGW-amide" evidence="2 3">
    <location>
        <begin position="91"/>
        <end position="94"/>
    </location>
</feature>
<feature type="propeptide" id="PRO_0000391448" evidence="3">
    <location>
        <begin position="98"/>
        <end position="105"/>
    </location>
</feature>
<feature type="peptide" id="PRO_0000391449" description="KPGW-amide" evidence="2 3">
    <location>
        <begin position="108"/>
        <end position="111"/>
    </location>
</feature>
<feature type="propeptide" id="PRO_0000391450" evidence="3">
    <location>
        <begin position="115"/>
        <end position="129"/>
    </location>
</feature>
<feature type="peptide" id="PRO_0000391451" description="RPGW-amide" evidence="2 3">
    <location>
        <begin position="132"/>
        <end position="135"/>
    </location>
</feature>
<feature type="propeptide" id="PRO_0000391452" evidence="3">
    <location>
        <begin position="139"/>
        <end position="146"/>
    </location>
</feature>
<feature type="peptide" id="PRO_0000391453" description="RPGW-amide" evidence="2 3">
    <location>
        <begin position="148"/>
        <end position="151"/>
    </location>
</feature>
<feature type="peptide" id="PRO_0000391454" description="TPGW-amide" evidence="2 3">
    <location>
        <begin position="155"/>
        <end position="158"/>
    </location>
</feature>
<feature type="propeptide" id="PRO_0000391455" evidence="3">
    <location>
        <begin position="162"/>
        <end position="196"/>
    </location>
</feature>
<feature type="modified residue" description="Tryptophan amide" evidence="2">
    <location>
        <position position="54"/>
    </location>
</feature>
<feature type="modified residue" description="Tryptophan amide" evidence="2">
    <location>
        <position position="74"/>
    </location>
</feature>
<feature type="modified residue" description="Tryptophan amide" evidence="2">
    <location>
        <position position="94"/>
    </location>
</feature>
<feature type="modified residue" description="Tryptophan amide" evidence="2">
    <location>
        <position position="111"/>
    </location>
</feature>
<feature type="modified residue" description="Tryptophan amide" evidence="2">
    <location>
        <position position="135"/>
    </location>
</feature>
<feature type="modified residue" description="Tryptophan amide" evidence="2">
    <location>
        <position position="151"/>
    </location>
</feature>
<feature type="modified residue" description="Tryptophan amide" evidence="2">
    <location>
        <position position="158"/>
    </location>
</feature>
<evidence type="ECO:0000255" key="1"/>
<evidence type="ECO:0000269" key="2">
    <source>
    </source>
</evidence>
<evidence type="ECO:0000269" key="3">
    <source>
    </source>
</evidence>
<evidence type="ECO:0000303" key="4">
    <source>
    </source>
</evidence>
<evidence type="ECO:0000303" key="5">
    <source>
    </source>
</evidence>
<evidence type="ECO:0000305" key="6"/>
<evidence type="ECO:0000312" key="7">
    <source>
        <dbReference type="EMBL" id="CAA63116.1"/>
    </source>
</evidence>
<keyword id="KW-0027">Amidation</keyword>
<keyword id="KW-0165">Cleavage on pair of basic residues</keyword>
<keyword id="KW-0527">Neuropeptide</keyword>
<keyword id="KW-0677">Repeat</keyword>
<keyword id="KW-0732">Signal</keyword>
<name>ARNP_MYTED</name>
<dbReference type="EMBL" id="X92372">
    <property type="protein sequence ID" value="CAA63116.1"/>
    <property type="molecule type" value="mRNA"/>
</dbReference>
<dbReference type="SMR" id="Q25461"/>
<dbReference type="GO" id="GO:0007218">
    <property type="term" value="P:neuropeptide signaling pathway"/>
    <property type="evidence" value="ECO:0007669"/>
    <property type="project" value="UniProtKB-KW"/>
</dbReference>
<sequence length="196" mass="22716">METLNIFLVIFSLLGTIIIASSSDESSERKKRDLDTIDDTNNDFLTADKRRPGWGKRSFDDDILNNLDKRRPGWGKRSDMLFDSEEIEKRRPGWGKRSSSLYDDEKRKPGWGKRSSALLDDLSLYNSIVKRRPGWGKRSDTFKVDIRRPGWGKRTPGWGKRSGPNMCMDFQDEILQLYKLLNEAEKLHSECEALNI</sequence>
<protein>
    <recommendedName>
        <fullName evidence="4 5">APGW-amide-related neuropeptide</fullName>
    </recommendedName>
    <component>
        <recommendedName>
            <fullName evidence="4 5">RPGW-amide</fullName>
        </recommendedName>
    </component>
    <component>
        <recommendedName>
            <fullName evidence="4 5">KPGW-amide</fullName>
        </recommendedName>
    </component>
    <component>
        <recommendedName>
            <fullName evidence="4 5">TPGW-amide</fullName>
        </recommendedName>
    </component>
</protein>
<proteinExistence type="evidence at protein level"/>
<comment type="function">
    <text evidence="2">RPGW-amide, KPGW-amide and TPGW-amide tetrapeptides are involved in control of muscle contraction and may function as neurotransmitters. These peptides increase tension of the pedal retractor muscle and, in conjunction with FMRF-amide, increase peak tension of the anterior byssus retractor muscle (ABRM).</text>
</comment>
<comment type="tissue specificity">
    <text evidence="2 3">Expressed in cerebral, pedal and visceral ganglia. TPGW-amide is found in pedal and cerebral ganglia and in shell adductor muscle (at protein level). RPGW-amide and KPGW-amide are found in pedal retractor muscle, ABRM and shell adductor muscle (at protein level).</text>
</comment>
<comment type="mass spectrometry" mass="514.2" method="Electrospray" evidence="2">
    <molecule>RPGW-amide</molecule>
    <text>The measured mass is that of RPGW-amide.</text>
</comment>
<comment type="mass spectrometry" mass="486.2" method="Electrospray" evidence="2">
    <molecule>KPGW-amide</molecule>
</comment>
<comment type="mass spectrometry" mass="459.1" method="Electrospray" evidence="2">
    <molecule>TPGW-amide</molecule>
</comment>
<comment type="miscellaneous">
    <text evidence="2">Tetrapeptides may be further processed to GW-amide, which is found in cerebral and pedal ganglia, by a dipeptidyl aminopeptidase.</text>
</comment>
<accession>Q25461</accession>